<gene>
    <name type="primary">UBA2A</name>
    <name type="ordered locus">At3g56860</name>
    <name type="ORF">T8M16.190</name>
</gene>
<accession>Q9LES2</accession>
<accession>C0Z2A5</accession>
<accession>Q94B29</accession>
<feature type="chain" id="PRO_0000425440" description="UBP1-associated protein 2A">
    <location>
        <begin position="1"/>
        <end position="478"/>
    </location>
</feature>
<feature type="domain" description="RRM 1" evidence="1">
    <location>
        <begin position="140"/>
        <end position="217"/>
    </location>
</feature>
<feature type="domain" description="RRM 2" evidence="1">
    <location>
        <begin position="245"/>
        <end position="328"/>
    </location>
</feature>
<feature type="region of interest" description="Disordered" evidence="2">
    <location>
        <begin position="1"/>
        <end position="99"/>
    </location>
</feature>
<feature type="region of interest" description="Disordered" evidence="2">
    <location>
        <begin position="321"/>
        <end position="359"/>
    </location>
</feature>
<feature type="region of interest" description="Disordered" evidence="2">
    <location>
        <begin position="442"/>
        <end position="478"/>
    </location>
</feature>
<feature type="compositionally biased region" description="Acidic residues" evidence="2">
    <location>
        <begin position="41"/>
        <end position="75"/>
    </location>
</feature>
<feature type="compositionally biased region" description="Low complexity" evidence="2">
    <location>
        <begin position="442"/>
        <end position="456"/>
    </location>
</feature>
<feature type="compositionally biased region" description="Gly residues" evidence="2">
    <location>
        <begin position="457"/>
        <end position="470"/>
    </location>
</feature>
<feature type="sequence conflict" description="In Ref. 4; AAK68825/AAM10089." evidence="7" ref="4">
    <original>N</original>
    <variation>D</variation>
    <location>
        <position position="90"/>
    </location>
</feature>
<feature type="sequence conflict" description="In Ref. 5; BAH56834." evidence="7" ref="5">
    <original>V</original>
    <variation>D</variation>
    <location>
        <position position="422"/>
    </location>
</feature>
<name>UBA2A_ARATH</name>
<reference key="1">
    <citation type="journal article" date="2002" name="Mol. Cell. Biol.">
        <title>UBA1 and UBA2, two proteins that interact with UBP1, a multifunctional effector of pre-mRNA maturation in plants.</title>
        <authorList>
            <person name="Lambermon M.H."/>
            <person name="Fu Y."/>
            <person name="Wieczorek Kirk D.A."/>
            <person name="Dupasquier M."/>
            <person name="Filipowicz W."/>
            <person name="Lorkovic Z.J."/>
        </authorList>
    </citation>
    <scope>NUCLEOTIDE SEQUENCE [MRNA]</scope>
    <scope>FUNCTION</scope>
    <scope>INTERACTION WITH UBA1A; UBA2A; UBP1A; UBP1B AND UBP1C</scope>
    <scope>SUBCELLULAR LOCATION</scope>
</reference>
<reference key="2">
    <citation type="journal article" date="2000" name="Nature">
        <title>Sequence and analysis of chromosome 3 of the plant Arabidopsis thaliana.</title>
        <authorList>
            <person name="Salanoubat M."/>
            <person name="Lemcke K."/>
            <person name="Rieger M."/>
            <person name="Ansorge W."/>
            <person name="Unseld M."/>
            <person name="Fartmann B."/>
            <person name="Valle G."/>
            <person name="Bloecker H."/>
            <person name="Perez-Alonso M."/>
            <person name="Obermaier B."/>
            <person name="Delseny M."/>
            <person name="Boutry M."/>
            <person name="Grivell L.A."/>
            <person name="Mache R."/>
            <person name="Puigdomenech P."/>
            <person name="De Simone V."/>
            <person name="Choisne N."/>
            <person name="Artiguenave F."/>
            <person name="Robert C."/>
            <person name="Brottier P."/>
            <person name="Wincker P."/>
            <person name="Cattolico L."/>
            <person name="Weissenbach J."/>
            <person name="Saurin W."/>
            <person name="Quetier F."/>
            <person name="Schaefer M."/>
            <person name="Mueller-Auer S."/>
            <person name="Gabel C."/>
            <person name="Fuchs M."/>
            <person name="Benes V."/>
            <person name="Wurmbach E."/>
            <person name="Drzonek H."/>
            <person name="Erfle H."/>
            <person name="Jordan N."/>
            <person name="Bangert S."/>
            <person name="Wiedelmann R."/>
            <person name="Kranz H."/>
            <person name="Voss H."/>
            <person name="Holland R."/>
            <person name="Brandt P."/>
            <person name="Nyakatura G."/>
            <person name="Vezzi A."/>
            <person name="D'Angelo M."/>
            <person name="Pallavicini A."/>
            <person name="Toppo S."/>
            <person name="Simionati B."/>
            <person name="Conrad A."/>
            <person name="Hornischer K."/>
            <person name="Kauer G."/>
            <person name="Loehnert T.-H."/>
            <person name="Nordsiek G."/>
            <person name="Reichelt J."/>
            <person name="Scharfe M."/>
            <person name="Schoen O."/>
            <person name="Bargues M."/>
            <person name="Terol J."/>
            <person name="Climent J."/>
            <person name="Navarro P."/>
            <person name="Collado C."/>
            <person name="Perez-Perez A."/>
            <person name="Ottenwaelder B."/>
            <person name="Duchemin D."/>
            <person name="Cooke R."/>
            <person name="Laudie M."/>
            <person name="Berger-Llauro C."/>
            <person name="Purnelle B."/>
            <person name="Masuy D."/>
            <person name="de Haan M."/>
            <person name="Maarse A.C."/>
            <person name="Alcaraz J.-P."/>
            <person name="Cottet A."/>
            <person name="Casacuberta E."/>
            <person name="Monfort A."/>
            <person name="Argiriou A."/>
            <person name="Flores M."/>
            <person name="Liguori R."/>
            <person name="Vitale D."/>
            <person name="Mannhaupt G."/>
            <person name="Haase D."/>
            <person name="Schoof H."/>
            <person name="Rudd S."/>
            <person name="Zaccaria P."/>
            <person name="Mewes H.-W."/>
            <person name="Mayer K.F.X."/>
            <person name="Kaul S."/>
            <person name="Town C.D."/>
            <person name="Koo H.L."/>
            <person name="Tallon L.J."/>
            <person name="Jenkins J."/>
            <person name="Rooney T."/>
            <person name="Rizzo M."/>
            <person name="Walts A."/>
            <person name="Utterback T."/>
            <person name="Fujii C.Y."/>
            <person name="Shea T.P."/>
            <person name="Creasy T.H."/>
            <person name="Haas B."/>
            <person name="Maiti R."/>
            <person name="Wu D."/>
            <person name="Peterson J."/>
            <person name="Van Aken S."/>
            <person name="Pai G."/>
            <person name="Militscher J."/>
            <person name="Sellers P."/>
            <person name="Gill J.E."/>
            <person name="Feldblyum T.V."/>
            <person name="Preuss D."/>
            <person name="Lin X."/>
            <person name="Nierman W.C."/>
            <person name="Salzberg S.L."/>
            <person name="White O."/>
            <person name="Venter J.C."/>
            <person name="Fraser C.M."/>
            <person name="Kaneko T."/>
            <person name="Nakamura Y."/>
            <person name="Sato S."/>
            <person name="Kato T."/>
            <person name="Asamizu E."/>
            <person name="Sasamoto S."/>
            <person name="Kimura T."/>
            <person name="Idesawa K."/>
            <person name="Kawashima K."/>
            <person name="Kishida Y."/>
            <person name="Kiyokawa C."/>
            <person name="Kohara M."/>
            <person name="Matsumoto M."/>
            <person name="Matsuno A."/>
            <person name="Muraki A."/>
            <person name="Nakayama S."/>
            <person name="Nakazaki N."/>
            <person name="Shinpo S."/>
            <person name="Takeuchi C."/>
            <person name="Wada T."/>
            <person name="Watanabe A."/>
            <person name="Yamada M."/>
            <person name="Yasuda M."/>
            <person name="Tabata S."/>
        </authorList>
    </citation>
    <scope>NUCLEOTIDE SEQUENCE [LARGE SCALE GENOMIC DNA]</scope>
    <source>
        <strain>cv. Columbia</strain>
    </source>
</reference>
<reference key="3">
    <citation type="journal article" date="2017" name="Plant J.">
        <title>Araport11: a complete reannotation of the Arabidopsis thaliana reference genome.</title>
        <authorList>
            <person name="Cheng C.Y."/>
            <person name="Krishnakumar V."/>
            <person name="Chan A.P."/>
            <person name="Thibaud-Nissen F."/>
            <person name="Schobel S."/>
            <person name="Town C.D."/>
        </authorList>
    </citation>
    <scope>GENOME REANNOTATION</scope>
    <source>
        <strain>cv. Columbia</strain>
    </source>
</reference>
<reference key="4">
    <citation type="journal article" date="2003" name="Science">
        <title>Empirical analysis of transcriptional activity in the Arabidopsis genome.</title>
        <authorList>
            <person name="Yamada K."/>
            <person name="Lim J."/>
            <person name="Dale J.M."/>
            <person name="Chen H."/>
            <person name="Shinn P."/>
            <person name="Palm C.J."/>
            <person name="Southwick A.M."/>
            <person name="Wu H.C."/>
            <person name="Kim C.J."/>
            <person name="Nguyen M."/>
            <person name="Pham P.K."/>
            <person name="Cheuk R.F."/>
            <person name="Karlin-Newmann G."/>
            <person name="Liu S.X."/>
            <person name="Lam B."/>
            <person name="Sakano H."/>
            <person name="Wu T."/>
            <person name="Yu G."/>
            <person name="Miranda M."/>
            <person name="Quach H.L."/>
            <person name="Tripp M."/>
            <person name="Chang C.H."/>
            <person name="Lee J.M."/>
            <person name="Toriumi M.J."/>
            <person name="Chan M.M."/>
            <person name="Tang C.C."/>
            <person name="Onodera C.S."/>
            <person name="Deng J.M."/>
            <person name="Akiyama K."/>
            <person name="Ansari Y."/>
            <person name="Arakawa T."/>
            <person name="Banh J."/>
            <person name="Banno F."/>
            <person name="Bowser L."/>
            <person name="Brooks S.Y."/>
            <person name="Carninci P."/>
            <person name="Chao Q."/>
            <person name="Choy N."/>
            <person name="Enju A."/>
            <person name="Goldsmith A.D."/>
            <person name="Gurjal M."/>
            <person name="Hansen N.F."/>
            <person name="Hayashizaki Y."/>
            <person name="Johnson-Hopson C."/>
            <person name="Hsuan V.W."/>
            <person name="Iida K."/>
            <person name="Karnes M."/>
            <person name="Khan S."/>
            <person name="Koesema E."/>
            <person name="Ishida J."/>
            <person name="Jiang P.X."/>
            <person name="Jones T."/>
            <person name="Kawai J."/>
            <person name="Kamiya A."/>
            <person name="Meyers C."/>
            <person name="Nakajima M."/>
            <person name="Narusaka M."/>
            <person name="Seki M."/>
            <person name="Sakurai T."/>
            <person name="Satou M."/>
            <person name="Tamse R."/>
            <person name="Vaysberg M."/>
            <person name="Wallender E.K."/>
            <person name="Wong C."/>
            <person name="Yamamura Y."/>
            <person name="Yuan S."/>
            <person name="Shinozaki K."/>
            <person name="Davis R.W."/>
            <person name="Theologis A."/>
            <person name="Ecker J.R."/>
        </authorList>
    </citation>
    <scope>NUCLEOTIDE SEQUENCE [LARGE SCALE MRNA]</scope>
    <source>
        <strain>cv. Columbia</strain>
    </source>
</reference>
<reference key="5">
    <citation type="journal article" date="2009" name="DNA Res.">
        <title>Analysis of multiple occurrences of alternative splicing events in Arabidopsis thaliana using novel sequenced full-length cDNAs.</title>
        <authorList>
            <person name="Iida K."/>
            <person name="Fukami-Kobayashi K."/>
            <person name="Toyoda A."/>
            <person name="Sakaki Y."/>
            <person name="Kobayashi M."/>
            <person name="Seki M."/>
            <person name="Shinozaki K."/>
        </authorList>
    </citation>
    <scope>NUCLEOTIDE SEQUENCE [LARGE SCALE MRNA]</scope>
    <source>
        <strain>cv. Columbia</strain>
        <tissue>Rosette leaf</tissue>
    </source>
</reference>
<reference key="6">
    <citation type="journal article" date="2006" name="FEBS Lett.">
        <title>Arabidopsis RNA-binding protein UBA2a relocalizes into nuclear speckles in response to abscisic acid.</title>
        <authorList>
            <person name="Riera M."/>
            <person name="Redko Y."/>
            <person name="Leung J."/>
        </authorList>
    </citation>
    <scope>INTERACTION WITH SRK2E</scope>
    <scope>SUBCELLULAR LOCATION</scope>
</reference>
<reference key="7">
    <citation type="journal article" date="2008" name="Plant Mol. Biol.">
        <title>Characterization of wound-responsive RNA-binding proteins and their splice variants in Arabidopsis.</title>
        <authorList>
            <person name="Bove J."/>
            <person name="Kim C.Y."/>
            <person name="Gibson C.A."/>
            <person name="Assmann S.M."/>
        </authorList>
    </citation>
    <scope>SUBCELLULAR LOCATION</scope>
    <scope>TISSUE SPECIFICITY</scope>
    <scope>INDUCTION</scope>
</reference>
<reference key="8">
    <citation type="journal article" date="2008" name="New Phytol.">
        <title>Overexpression of wound-responsive RNA-binding proteins induces leaf senescence and hypersensitive-like cell death.</title>
        <authorList>
            <person name="Kim C.Y."/>
            <person name="Bove J."/>
            <person name="Assmann S.M."/>
        </authorList>
    </citation>
    <scope>SUBCELLULAR LOCATION</scope>
</reference>
<organism>
    <name type="scientific">Arabidopsis thaliana</name>
    <name type="common">Mouse-ear cress</name>
    <dbReference type="NCBI Taxonomy" id="3702"/>
    <lineage>
        <taxon>Eukaryota</taxon>
        <taxon>Viridiplantae</taxon>
        <taxon>Streptophyta</taxon>
        <taxon>Embryophyta</taxon>
        <taxon>Tracheophyta</taxon>
        <taxon>Spermatophyta</taxon>
        <taxon>Magnoliopsida</taxon>
        <taxon>eudicotyledons</taxon>
        <taxon>Gunneridae</taxon>
        <taxon>Pentapetalae</taxon>
        <taxon>rosids</taxon>
        <taxon>malvids</taxon>
        <taxon>Brassicales</taxon>
        <taxon>Brassicaceae</taxon>
        <taxon>Camelineae</taxon>
        <taxon>Arabidopsis</taxon>
    </lineage>
</organism>
<evidence type="ECO:0000255" key="1">
    <source>
        <dbReference type="PROSITE-ProRule" id="PRU00176"/>
    </source>
</evidence>
<evidence type="ECO:0000256" key="2">
    <source>
        <dbReference type="SAM" id="MobiDB-lite"/>
    </source>
</evidence>
<evidence type="ECO:0000269" key="3">
    <source>
    </source>
</evidence>
<evidence type="ECO:0000269" key="4">
    <source>
    </source>
</evidence>
<evidence type="ECO:0000269" key="5">
    <source>
    </source>
</evidence>
<evidence type="ECO:0000269" key="6">
    <source>
    </source>
</evidence>
<evidence type="ECO:0000305" key="7"/>
<evidence type="ECO:0000305" key="8">
    <source>
    </source>
</evidence>
<keyword id="KW-0539">Nucleus</keyword>
<keyword id="KW-1185">Reference proteome</keyword>
<keyword id="KW-0677">Repeat</keyword>
<keyword id="KW-0694">RNA-binding</keyword>
<dbReference type="EMBL" id="AJ439404">
    <property type="protein sequence ID" value="CAD28672.1"/>
    <property type="molecule type" value="mRNA"/>
</dbReference>
<dbReference type="EMBL" id="AL390921">
    <property type="protein sequence ID" value="CAC00749.1"/>
    <property type="molecule type" value="Genomic_DNA"/>
</dbReference>
<dbReference type="EMBL" id="CP002686">
    <property type="protein sequence ID" value="AEE79575.1"/>
    <property type="molecule type" value="Genomic_DNA"/>
</dbReference>
<dbReference type="EMBL" id="CP002686">
    <property type="protein sequence ID" value="AEE79576.1"/>
    <property type="molecule type" value="Genomic_DNA"/>
</dbReference>
<dbReference type="EMBL" id="CP002686">
    <property type="protein sequence ID" value="AEE79577.1"/>
    <property type="molecule type" value="Genomic_DNA"/>
</dbReference>
<dbReference type="EMBL" id="CP002686">
    <property type="protein sequence ID" value="AEE79578.1"/>
    <property type="molecule type" value="Genomic_DNA"/>
</dbReference>
<dbReference type="EMBL" id="CP002686">
    <property type="protein sequence ID" value="AEE79579.1"/>
    <property type="molecule type" value="Genomic_DNA"/>
</dbReference>
<dbReference type="EMBL" id="CP002686">
    <property type="protein sequence ID" value="ANM63908.1"/>
    <property type="molecule type" value="Genomic_DNA"/>
</dbReference>
<dbReference type="EMBL" id="CP002686">
    <property type="protein sequence ID" value="ANM63909.1"/>
    <property type="molecule type" value="Genomic_DNA"/>
</dbReference>
<dbReference type="EMBL" id="CP002686">
    <property type="protein sequence ID" value="ANM63910.1"/>
    <property type="molecule type" value="Genomic_DNA"/>
</dbReference>
<dbReference type="EMBL" id="CP002686">
    <property type="protein sequence ID" value="ANM63911.1"/>
    <property type="molecule type" value="Genomic_DNA"/>
</dbReference>
<dbReference type="EMBL" id="CP002686">
    <property type="protein sequence ID" value="ANM63912.1"/>
    <property type="molecule type" value="Genomic_DNA"/>
</dbReference>
<dbReference type="EMBL" id="CP002686">
    <property type="protein sequence ID" value="ANM63913.1"/>
    <property type="molecule type" value="Genomic_DNA"/>
</dbReference>
<dbReference type="EMBL" id="AF367280">
    <property type="protein sequence ID" value="AAK56269.1"/>
    <property type="molecule type" value="mRNA"/>
</dbReference>
<dbReference type="EMBL" id="AY037245">
    <property type="protein sequence ID" value="AAK59846.1"/>
    <property type="molecule type" value="mRNA"/>
</dbReference>
<dbReference type="EMBL" id="AY042885">
    <property type="protein sequence ID" value="AAK68825.1"/>
    <property type="molecule type" value="mRNA"/>
</dbReference>
<dbReference type="EMBL" id="AY081527">
    <property type="protein sequence ID" value="AAM10089.1"/>
    <property type="molecule type" value="mRNA"/>
</dbReference>
<dbReference type="EMBL" id="AY091040">
    <property type="protein sequence ID" value="AAM13861.1"/>
    <property type="molecule type" value="mRNA"/>
</dbReference>
<dbReference type="EMBL" id="AY117351">
    <property type="protein sequence ID" value="AAM51426.1"/>
    <property type="molecule type" value="mRNA"/>
</dbReference>
<dbReference type="EMBL" id="AY133549">
    <property type="protein sequence ID" value="AAM91379.1"/>
    <property type="molecule type" value="mRNA"/>
</dbReference>
<dbReference type="EMBL" id="BT006368">
    <property type="protein sequence ID" value="AAP21176.1"/>
    <property type="molecule type" value="mRNA"/>
</dbReference>
<dbReference type="EMBL" id="AK318719">
    <property type="protein sequence ID" value="BAH56834.1"/>
    <property type="molecule type" value="mRNA"/>
</dbReference>
<dbReference type="PIR" id="T51274">
    <property type="entry name" value="T51274"/>
</dbReference>
<dbReference type="RefSeq" id="NP_001190109.1">
    <property type="nucleotide sequence ID" value="NM_001203180.2"/>
</dbReference>
<dbReference type="RefSeq" id="NP_001190110.1">
    <property type="nucleotide sequence ID" value="NM_001203181.1"/>
</dbReference>
<dbReference type="RefSeq" id="NP_001319772.1">
    <property type="nucleotide sequence ID" value="NM_001339828.1"/>
</dbReference>
<dbReference type="RefSeq" id="NP_001325969.1">
    <property type="nucleotide sequence ID" value="NM_001339831.1"/>
</dbReference>
<dbReference type="RefSeq" id="NP_001325970.1">
    <property type="nucleotide sequence ID" value="NM_001339830.1"/>
</dbReference>
<dbReference type="RefSeq" id="NP_001325971.1">
    <property type="nucleotide sequence ID" value="NM_001339829.1"/>
</dbReference>
<dbReference type="RefSeq" id="NP_001325972.1">
    <property type="nucleotide sequence ID" value="NM_001339826.1"/>
</dbReference>
<dbReference type="RefSeq" id="NP_001325973.1">
    <property type="nucleotide sequence ID" value="NM_001339827.1"/>
</dbReference>
<dbReference type="RefSeq" id="NP_567042.1">
    <property type="nucleotide sequence ID" value="NM_115545.4"/>
</dbReference>
<dbReference type="RefSeq" id="NP_850710.1">
    <property type="nucleotide sequence ID" value="NM_180379.4"/>
</dbReference>
<dbReference type="RefSeq" id="NP_850711.1">
    <property type="nucleotide sequence ID" value="NM_180380.3"/>
</dbReference>
<dbReference type="SMR" id="Q9LES2"/>
<dbReference type="BioGRID" id="10169">
    <property type="interactions" value="11"/>
</dbReference>
<dbReference type="FunCoup" id="Q9LES2">
    <property type="interactions" value="1809"/>
</dbReference>
<dbReference type="IntAct" id="Q9LES2">
    <property type="interactions" value="10"/>
</dbReference>
<dbReference type="STRING" id="3702.Q9LES2"/>
<dbReference type="iPTMnet" id="Q9LES2"/>
<dbReference type="PaxDb" id="3702-AT3G56860.3"/>
<dbReference type="ProteomicsDB" id="228735"/>
<dbReference type="EnsemblPlants" id="AT3G56860.1">
    <property type="protein sequence ID" value="AT3G56860.1"/>
    <property type="gene ID" value="AT3G56860"/>
</dbReference>
<dbReference type="EnsemblPlants" id="AT3G56860.10">
    <property type="protein sequence ID" value="AT3G56860.10"/>
    <property type="gene ID" value="AT3G56860"/>
</dbReference>
<dbReference type="EnsemblPlants" id="AT3G56860.11">
    <property type="protein sequence ID" value="AT3G56860.11"/>
    <property type="gene ID" value="AT3G56860"/>
</dbReference>
<dbReference type="EnsemblPlants" id="AT3G56860.2">
    <property type="protein sequence ID" value="AT3G56860.2"/>
    <property type="gene ID" value="AT3G56860"/>
</dbReference>
<dbReference type="EnsemblPlants" id="AT3G56860.3">
    <property type="protein sequence ID" value="AT3G56860.3"/>
    <property type="gene ID" value="AT3G56860"/>
</dbReference>
<dbReference type="EnsemblPlants" id="AT3G56860.4">
    <property type="protein sequence ID" value="AT3G56860.4"/>
    <property type="gene ID" value="AT3G56860"/>
</dbReference>
<dbReference type="EnsemblPlants" id="AT3G56860.5">
    <property type="protein sequence ID" value="AT3G56860.5"/>
    <property type="gene ID" value="AT3G56860"/>
</dbReference>
<dbReference type="EnsemblPlants" id="AT3G56860.6">
    <property type="protein sequence ID" value="AT3G56860.6"/>
    <property type="gene ID" value="AT3G56860"/>
</dbReference>
<dbReference type="EnsemblPlants" id="AT3G56860.7">
    <property type="protein sequence ID" value="AT3G56860.7"/>
    <property type="gene ID" value="AT3G56860"/>
</dbReference>
<dbReference type="EnsemblPlants" id="AT3G56860.8">
    <property type="protein sequence ID" value="AT3G56860.8"/>
    <property type="gene ID" value="AT3G56860"/>
</dbReference>
<dbReference type="EnsemblPlants" id="AT3G56860.9">
    <property type="protein sequence ID" value="AT3G56860.9"/>
    <property type="gene ID" value="AT3G56860"/>
</dbReference>
<dbReference type="GeneID" id="824853"/>
<dbReference type="Gramene" id="AT3G56860.1">
    <property type="protein sequence ID" value="AT3G56860.1"/>
    <property type="gene ID" value="AT3G56860"/>
</dbReference>
<dbReference type="Gramene" id="AT3G56860.10">
    <property type="protein sequence ID" value="AT3G56860.10"/>
    <property type="gene ID" value="AT3G56860"/>
</dbReference>
<dbReference type="Gramene" id="AT3G56860.11">
    <property type="protein sequence ID" value="AT3G56860.11"/>
    <property type="gene ID" value="AT3G56860"/>
</dbReference>
<dbReference type="Gramene" id="AT3G56860.2">
    <property type="protein sequence ID" value="AT3G56860.2"/>
    <property type="gene ID" value="AT3G56860"/>
</dbReference>
<dbReference type="Gramene" id="AT3G56860.3">
    <property type="protein sequence ID" value="AT3G56860.3"/>
    <property type="gene ID" value="AT3G56860"/>
</dbReference>
<dbReference type="Gramene" id="AT3G56860.4">
    <property type="protein sequence ID" value="AT3G56860.4"/>
    <property type="gene ID" value="AT3G56860"/>
</dbReference>
<dbReference type="Gramene" id="AT3G56860.5">
    <property type="protein sequence ID" value="AT3G56860.5"/>
    <property type="gene ID" value="AT3G56860"/>
</dbReference>
<dbReference type="Gramene" id="AT3G56860.6">
    <property type="protein sequence ID" value="AT3G56860.6"/>
    <property type="gene ID" value="AT3G56860"/>
</dbReference>
<dbReference type="Gramene" id="AT3G56860.7">
    <property type="protein sequence ID" value="AT3G56860.7"/>
    <property type="gene ID" value="AT3G56860"/>
</dbReference>
<dbReference type="Gramene" id="AT3G56860.8">
    <property type="protein sequence ID" value="AT3G56860.8"/>
    <property type="gene ID" value="AT3G56860"/>
</dbReference>
<dbReference type="Gramene" id="AT3G56860.9">
    <property type="protein sequence ID" value="AT3G56860.9"/>
    <property type="gene ID" value="AT3G56860"/>
</dbReference>
<dbReference type="KEGG" id="ath:AT3G56860"/>
<dbReference type="Araport" id="AT3G56860"/>
<dbReference type="TAIR" id="AT3G56860">
    <property type="gene designation" value="UBA2A"/>
</dbReference>
<dbReference type="eggNOG" id="KOG0118">
    <property type="taxonomic scope" value="Eukaryota"/>
</dbReference>
<dbReference type="HOGENOM" id="CLU_012062_1_6_1"/>
<dbReference type="InParanoid" id="Q9LES2"/>
<dbReference type="OMA" id="QPYITIH"/>
<dbReference type="OrthoDB" id="1875751at2759"/>
<dbReference type="PhylomeDB" id="Q9LES2"/>
<dbReference type="PRO" id="PR:Q9LES2"/>
<dbReference type="Proteomes" id="UP000006548">
    <property type="component" value="Chromosome 3"/>
</dbReference>
<dbReference type="ExpressionAtlas" id="Q9LES2">
    <property type="expression patterns" value="baseline and differential"/>
</dbReference>
<dbReference type="GO" id="GO:0005634">
    <property type="term" value="C:nucleus"/>
    <property type="evidence" value="ECO:0000314"/>
    <property type="project" value="TAIR"/>
</dbReference>
<dbReference type="GO" id="GO:0035925">
    <property type="term" value="F:mRNA 3'-UTR AU-rich region binding"/>
    <property type="evidence" value="ECO:0000314"/>
    <property type="project" value="TAIR"/>
</dbReference>
<dbReference type="GO" id="GO:0003729">
    <property type="term" value="F:mRNA binding"/>
    <property type="evidence" value="ECO:0000314"/>
    <property type="project" value="TAIR"/>
</dbReference>
<dbReference type="GO" id="GO:0009738">
    <property type="term" value="P:abscisic acid-activated signaling pathway"/>
    <property type="evidence" value="ECO:0000304"/>
    <property type="project" value="TAIR"/>
</dbReference>
<dbReference type="GO" id="GO:0008219">
    <property type="term" value="P:cell death"/>
    <property type="evidence" value="ECO:0000315"/>
    <property type="project" value="TAIR"/>
</dbReference>
<dbReference type="GO" id="GO:0006952">
    <property type="term" value="P:defense response"/>
    <property type="evidence" value="ECO:0000315"/>
    <property type="project" value="TAIR"/>
</dbReference>
<dbReference type="GO" id="GO:0009693">
    <property type="term" value="P:ethylene biosynthetic process"/>
    <property type="evidence" value="ECO:0000315"/>
    <property type="project" value="TAIR"/>
</dbReference>
<dbReference type="GO" id="GO:0010150">
    <property type="term" value="P:leaf senescence"/>
    <property type="evidence" value="ECO:0000315"/>
    <property type="project" value="TAIR"/>
</dbReference>
<dbReference type="GO" id="GO:0048255">
    <property type="term" value="P:mRNA stabilization"/>
    <property type="evidence" value="ECO:0000303"/>
    <property type="project" value="TAIR"/>
</dbReference>
<dbReference type="FunFam" id="3.30.70.330:FF:000978">
    <property type="entry name" value="UBP1-associated protein 2A"/>
    <property type="match status" value="1"/>
</dbReference>
<dbReference type="Gene3D" id="3.30.70.330">
    <property type="match status" value="2"/>
</dbReference>
<dbReference type="InterPro" id="IPR012677">
    <property type="entry name" value="Nucleotide-bd_a/b_plait_sf"/>
</dbReference>
<dbReference type="InterPro" id="IPR035979">
    <property type="entry name" value="RBD_domain_sf"/>
</dbReference>
<dbReference type="InterPro" id="IPR000504">
    <property type="entry name" value="RRM_dom"/>
</dbReference>
<dbReference type="PANTHER" id="PTHR10352">
    <property type="entry name" value="EUKARYOTIC TRANSLATION INITIATION FACTOR 3 SUBUNIT G"/>
    <property type="match status" value="1"/>
</dbReference>
<dbReference type="Pfam" id="PF00076">
    <property type="entry name" value="RRM_1"/>
    <property type="match status" value="2"/>
</dbReference>
<dbReference type="SMART" id="SM00360">
    <property type="entry name" value="RRM"/>
    <property type="match status" value="2"/>
</dbReference>
<dbReference type="SUPFAM" id="SSF54928">
    <property type="entry name" value="RNA-binding domain, RBD"/>
    <property type="match status" value="2"/>
</dbReference>
<dbReference type="PROSITE" id="PS50102">
    <property type="entry name" value="RRM"/>
    <property type="match status" value="2"/>
</dbReference>
<proteinExistence type="evidence at protein level"/>
<sequence length="478" mass="51439">MTKKRKLEGEESNEAEEPSQKLKQTPEEEQQLVIKNQDNQGDVEEVEYEEVEEEQEEEVEDDDDEDDGDENEDQTDGNRIEAAATSGSGNQEDDDDEPIQDLLEPFSKEQVLSLLKEAAEKHVDVANRIREVADEDPVHRKIFVHGLGWDTKTETLIEAFKQYGEIEDCKAVFDKISGKSKGYGFILYKSRSGARNALKQPQKKIGSRMTACQLASKGPVFGGAPIAAAAVSAPAQHSNSEHTQKKIYVSNVGAELDPQKLLMFFSKFGEIEEGPLGLDKYTGRPKGFCLFVYKSSESAKRALEEPHKTFEGHILHCQKAIDGPKPGKQQQHHHNPHAYNNPRYQRNDNNGYGPPGGHGHLMAGNPAGMGGPTAQVINPAIGQALTALLASQGAGLAFNPAIGQALLGSLGTAAGVNPGNGVGMPTGYGTQAMAPGTMPGYGTQPGLQGGYQTPQPGQGGTSRGQHGVGPYGTPYMGH</sequence>
<protein>
    <recommendedName>
        <fullName>UBP1-associated protein 2A</fullName>
    </recommendedName>
    <alternativeName>
        <fullName>UBP1-interacting protein 2a</fullName>
    </alternativeName>
</protein>
<comment type="function">
    <text evidence="3">Heterogeneous nuclear ribonucleoprotein (hnRNP)-like protein that acts as a component of a complex regulating the turnover of mRNAs in the nucleus. Binds with high affinity to RNA molecules that contain U-rich sequences in 3'-UTRs. May function in complex with UBP1 and contribute to the stabilization of mRNAs in the nucleus. However, unlike UBP1, UBA2A does not stimulate pre-mRNA splicing.</text>
</comment>
<comment type="subunit">
    <text evidence="3 4">Interacts with UBA1A, UBA2A, UBP1A, UBP1B, UBP1C and SRK2E.</text>
</comment>
<comment type="interaction">
    <interactant intactId="EBI-346288">
        <id>Q9LES2</id>
    </interactant>
    <interactant intactId="EBI-346271">
        <id>Q9SHZ6</id>
        <label>UBA1A</label>
    </interactant>
    <organismsDiffer>false</organismsDiffer>
    <experiments>3</experiments>
</comment>
<comment type="subcellular location">
    <subcellularLocation>
        <location evidence="3 4 5 6">Nucleus</location>
    </subcellularLocation>
    <text>Relocalizes into nuclear speckles in response to abscisic acid (ABA).</text>
</comment>
<comment type="tissue specificity">
    <text evidence="5">Expressed in young leaves, flowers and embryos.</text>
</comment>
<comment type="induction">
    <text evidence="5">By wounding.</text>
</comment>
<comment type="miscellaneous">
    <text evidence="8">Plants over-expressing UB2A1 display severe growth defects consisting of premature cell death and chlorosis.</text>
</comment>